<feature type="chain" id="PRO_1000196058" description="Large ribosomal subunit protein bL34">
    <location>
        <begin position="1"/>
        <end position="46"/>
    </location>
</feature>
<gene>
    <name evidence="1" type="primary">rpmH</name>
    <name type="ordered locus">KPK_5567</name>
</gene>
<reference key="1">
    <citation type="journal article" date="2008" name="PLoS Genet.">
        <title>Complete genome sequence of the N2-fixing broad host range endophyte Klebsiella pneumoniae 342 and virulence predictions verified in mice.</title>
        <authorList>
            <person name="Fouts D.E."/>
            <person name="Tyler H.L."/>
            <person name="DeBoy R.T."/>
            <person name="Daugherty S."/>
            <person name="Ren Q."/>
            <person name="Badger J.H."/>
            <person name="Durkin A.S."/>
            <person name="Huot H."/>
            <person name="Shrivastava S."/>
            <person name="Kothari S."/>
            <person name="Dodson R.J."/>
            <person name="Mohamoud Y."/>
            <person name="Khouri H."/>
            <person name="Roesch L.F.W."/>
            <person name="Krogfelt K.A."/>
            <person name="Struve C."/>
            <person name="Triplett E.W."/>
            <person name="Methe B.A."/>
        </authorList>
    </citation>
    <scope>NUCLEOTIDE SEQUENCE [LARGE SCALE GENOMIC DNA]</scope>
    <source>
        <strain>342</strain>
    </source>
</reference>
<protein>
    <recommendedName>
        <fullName evidence="1">Large ribosomal subunit protein bL34</fullName>
    </recommendedName>
    <alternativeName>
        <fullName evidence="2">50S ribosomal protein L34</fullName>
    </alternativeName>
</protein>
<comment type="similarity">
    <text evidence="1">Belongs to the bacterial ribosomal protein bL34 family.</text>
</comment>
<evidence type="ECO:0000255" key="1">
    <source>
        <dbReference type="HAMAP-Rule" id="MF_00391"/>
    </source>
</evidence>
<evidence type="ECO:0000305" key="2"/>
<keyword id="KW-0687">Ribonucleoprotein</keyword>
<keyword id="KW-0689">Ribosomal protein</keyword>
<organism>
    <name type="scientific">Klebsiella pneumoniae (strain 342)</name>
    <dbReference type="NCBI Taxonomy" id="507522"/>
    <lineage>
        <taxon>Bacteria</taxon>
        <taxon>Pseudomonadati</taxon>
        <taxon>Pseudomonadota</taxon>
        <taxon>Gammaproteobacteria</taxon>
        <taxon>Enterobacterales</taxon>
        <taxon>Enterobacteriaceae</taxon>
        <taxon>Klebsiella/Raoultella group</taxon>
        <taxon>Klebsiella</taxon>
        <taxon>Klebsiella pneumoniae complex</taxon>
    </lineage>
</organism>
<dbReference type="EMBL" id="CP000964">
    <property type="protein sequence ID" value="ACI10046.1"/>
    <property type="molecule type" value="Genomic_DNA"/>
</dbReference>
<dbReference type="SMR" id="B5XZP7"/>
<dbReference type="KEGG" id="kpe:KPK_5567"/>
<dbReference type="HOGENOM" id="CLU_129938_2_1_6"/>
<dbReference type="Proteomes" id="UP000001734">
    <property type="component" value="Chromosome"/>
</dbReference>
<dbReference type="GO" id="GO:1990904">
    <property type="term" value="C:ribonucleoprotein complex"/>
    <property type="evidence" value="ECO:0007669"/>
    <property type="project" value="UniProtKB-KW"/>
</dbReference>
<dbReference type="GO" id="GO:0005840">
    <property type="term" value="C:ribosome"/>
    <property type="evidence" value="ECO:0007669"/>
    <property type="project" value="UniProtKB-KW"/>
</dbReference>
<dbReference type="GO" id="GO:0003735">
    <property type="term" value="F:structural constituent of ribosome"/>
    <property type="evidence" value="ECO:0007669"/>
    <property type="project" value="InterPro"/>
</dbReference>
<dbReference type="GO" id="GO:0006412">
    <property type="term" value="P:translation"/>
    <property type="evidence" value="ECO:0007669"/>
    <property type="project" value="UniProtKB-UniRule"/>
</dbReference>
<dbReference type="FunFam" id="1.10.287.3980:FF:000001">
    <property type="entry name" value="Mitochondrial ribosomal protein L34"/>
    <property type="match status" value="1"/>
</dbReference>
<dbReference type="Gene3D" id="1.10.287.3980">
    <property type="match status" value="1"/>
</dbReference>
<dbReference type="HAMAP" id="MF_00391">
    <property type="entry name" value="Ribosomal_bL34"/>
    <property type="match status" value="1"/>
</dbReference>
<dbReference type="InterPro" id="IPR000271">
    <property type="entry name" value="Ribosomal_bL34"/>
</dbReference>
<dbReference type="InterPro" id="IPR020939">
    <property type="entry name" value="Ribosomal_bL34_CS"/>
</dbReference>
<dbReference type="NCBIfam" id="TIGR01030">
    <property type="entry name" value="rpmH_bact"/>
    <property type="match status" value="1"/>
</dbReference>
<dbReference type="PANTHER" id="PTHR14503:SF4">
    <property type="entry name" value="LARGE RIBOSOMAL SUBUNIT PROTEIN BL34M"/>
    <property type="match status" value="1"/>
</dbReference>
<dbReference type="PANTHER" id="PTHR14503">
    <property type="entry name" value="MITOCHONDRIAL RIBOSOMAL PROTEIN 34 FAMILY MEMBER"/>
    <property type="match status" value="1"/>
</dbReference>
<dbReference type="Pfam" id="PF00468">
    <property type="entry name" value="Ribosomal_L34"/>
    <property type="match status" value="1"/>
</dbReference>
<dbReference type="PROSITE" id="PS00784">
    <property type="entry name" value="RIBOSOMAL_L34"/>
    <property type="match status" value="1"/>
</dbReference>
<name>RL34_KLEP3</name>
<proteinExistence type="inferred from homology"/>
<accession>B5XZP7</accession>
<sequence>MKRTFQPSVLKRNRSHGFRARMATKNGRQVLARRRAKGRARLTVSK</sequence>